<comment type="similarity">
    <text evidence="1">Belongs to the bacterial ribosomal protein bL28 family.</text>
</comment>
<organism>
    <name type="scientific">Parasynechococcus marenigrum (strain WH8102)</name>
    <dbReference type="NCBI Taxonomy" id="84588"/>
    <lineage>
        <taxon>Bacteria</taxon>
        <taxon>Bacillati</taxon>
        <taxon>Cyanobacteriota</taxon>
        <taxon>Cyanophyceae</taxon>
        <taxon>Synechococcales</taxon>
        <taxon>Prochlorococcaceae</taxon>
        <taxon>Parasynechococcus</taxon>
        <taxon>Parasynechococcus marenigrum</taxon>
    </lineage>
</organism>
<gene>
    <name evidence="1" type="primary">rpmB</name>
    <name evidence="1" type="synonym">rpl28</name>
    <name type="ordered locus">SYNW1279</name>
</gene>
<dbReference type="EMBL" id="BX569692">
    <property type="protein sequence ID" value="CAE07794.1"/>
    <property type="molecule type" value="Genomic_DNA"/>
</dbReference>
<dbReference type="RefSeq" id="WP_011128143.1">
    <property type="nucleotide sequence ID" value="NC_005070.1"/>
</dbReference>
<dbReference type="SMR" id="Q7U6Q8"/>
<dbReference type="STRING" id="84588.SYNW1279"/>
<dbReference type="KEGG" id="syw:SYNW1279"/>
<dbReference type="eggNOG" id="COG0227">
    <property type="taxonomic scope" value="Bacteria"/>
</dbReference>
<dbReference type="HOGENOM" id="CLU_064548_3_0_3"/>
<dbReference type="Proteomes" id="UP000001422">
    <property type="component" value="Chromosome"/>
</dbReference>
<dbReference type="GO" id="GO:1990904">
    <property type="term" value="C:ribonucleoprotein complex"/>
    <property type="evidence" value="ECO:0007669"/>
    <property type="project" value="UniProtKB-KW"/>
</dbReference>
<dbReference type="GO" id="GO:0005840">
    <property type="term" value="C:ribosome"/>
    <property type="evidence" value="ECO:0007669"/>
    <property type="project" value="UniProtKB-KW"/>
</dbReference>
<dbReference type="GO" id="GO:0003735">
    <property type="term" value="F:structural constituent of ribosome"/>
    <property type="evidence" value="ECO:0007669"/>
    <property type="project" value="InterPro"/>
</dbReference>
<dbReference type="GO" id="GO:0006412">
    <property type="term" value="P:translation"/>
    <property type="evidence" value="ECO:0007669"/>
    <property type="project" value="UniProtKB-UniRule"/>
</dbReference>
<dbReference type="Gene3D" id="2.30.170.40">
    <property type="entry name" value="Ribosomal protein L28/L24"/>
    <property type="match status" value="1"/>
</dbReference>
<dbReference type="HAMAP" id="MF_00373">
    <property type="entry name" value="Ribosomal_bL28"/>
    <property type="match status" value="1"/>
</dbReference>
<dbReference type="InterPro" id="IPR026569">
    <property type="entry name" value="Ribosomal_bL28"/>
</dbReference>
<dbReference type="InterPro" id="IPR034704">
    <property type="entry name" value="Ribosomal_bL28/bL31-like_sf"/>
</dbReference>
<dbReference type="InterPro" id="IPR001383">
    <property type="entry name" value="Ribosomal_bL28_bact-type"/>
</dbReference>
<dbReference type="InterPro" id="IPR037147">
    <property type="entry name" value="Ribosomal_bL28_sf"/>
</dbReference>
<dbReference type="NCBIfam" id="TIGR00009">
    <property type="entry name" value="L28"/>
    <property type="match status" value="1"/>
</dbReference>
<dbReference type="PANTHER" id="PTHR13528">
    <property type="entry name" value="39S RIBOSOMAL PROTEIN L28, MITOCHONDRIAL"/>
    <property type="match status" value="1"/>
</dbReference>
<dbReference type="PANTHER" id="PTHR13528:SF2">
    <property type="entry name" value="LARGE RIBOSOMAL SUBUNIT PROTEIN BL28M"/>
    <property type="match status" value="1"/>
</dbReference>
<dbReference type="Pfam" id="PF00830">
    <property type="entry name" value="Ribosomal_L28"/>
    <property type="match status" value="1"/>
</dbReference>
<dbReference type="SUPFAM" id="SSF143800">
    <property type="entry name" value="L28p-like"/>
    <property type="match status" value="1"/>
</dbReference>
<name>RL28_PARMW</name>
<protein>
    <recommendedName>
        <fullName evidence="1">Large ribosomal subunit protein bL28</fullName>
    </recommendedName>
    <alternativeName>
        <fullName evidence="2">50S ribosomal protein L28</fullName>
    </alternativeName>
</protein>
<keyword id="KW-0687">Ribonucleoprotein</keyword>
<keyword id="KW-0689">Ribosomal protein</keyword>
<reference key="1">
    <citation type="journal article" date="2003" name="Nature">
        <title>The genome of a motile marine Synechococcus.</title>
        <authorList>
            <person name="Palenik B."/>
            <person name="Brahamsha B."/>
            <person name="Larimer F.W."/>
            <person name="Land M.L."/>
            <person name="Hauser L."/>
            <person name="Chain P."/>
            <person name="Lamerdin J.E."/>
            <person name="Regala W."/>
            <person name="Allen E.E."/>
            <person name="McCarren J."/>
            <person name="Paulsen I.T."/>
            <person name="Dufresne A."/>
            <person name="Partensky F."/>
            <person name="Webb E.A."/>
            <person name="Waterbury J."/>
        </authorList>
    </citation>
    <scope>NUCLEOTIDE SEQUENCE [LARGE SCALE GENOMIC DNA]</scope>
    <source>
        <strain>WH8102</strain>
    </source>
</reference>
<sequence length="78" mass="8868">MSRVCQLTGTRANNGMAVSHSHIRTKKLQQANLQNRRLWWAEGKRWVNLRVTTRALKTIQKKGLGPYAKSLGINLAKL</sequence>
<evidence type="ECO:0000255" key="1">
    <source>
        <dbReference type="HAMAP-Rule" id="MF_00373"/>
    </source>
</evidence>
<evidence type="ECO:0000305" key="2"/>
<accession>Q7U6Q8</accession>
<feature type="chain" id="PRO_0000178574" description="Large ribosomal subunit protein bL28">
    <location>
        <begin position="1"/>
        <end position="78"/>
    </location>
</feature>
<proteinExistence type="inferred from homology"/>